<reference key="1">
    <citation type="journal article" date="2006" name="Nat. Biotechnol.">
        <title>Genome sequence of the ubiquitous hydrocarbon-degrading marine bacterium Alcanivorax borkumensis.</title>
        <authorList>
            <person name="Schneiker S."/>
            <person name="Martins dos Santos V.A.P."/>
            <person name="Bartels D."/>
            <person name="Bekel T."/>
            <person name="Brecht M."/>
            <person name="Buhrmester J."/>
            <person name="Chernikova T.N."/>
            <person name="Denaro R."/>
            <person name="Ferrer M."/>
            <person name="Gertler C."/>
            <person name="Goesmann A."/>
            <person name="Golyshina O.V."/>
            <person name="Kaminski F."/>
            <person name="Khachane A.N."/>
            <person name="Lang S."/>
            <person name="Linke B."/>
            <person name="McHardy A.C."/>
            <person name="Meyer F."/>
            <person name="Nechitaylo T."/>
            <person name="Puehler A."/>
            <person name="Regenhardt D."/>
            <person name="Rupp O."/>
            <person name="Sabirova J.S."/>
            <person name="Selbitschka W."/>
            <person name="Yakimov M.M."/>
            <person name="Timmis K.N."/>
            <person name="Vorhoelter F.-J."/>
            <person name="Weidner S."/>
            <person name="Kaiser O."/>
            <person name="Golyshin P.N."/>
        </authorList>
    </citation>
    <scope>NUCLEOTIDE SEQUENCE [LARGE SCALE GENOMIC DNA]</scope>
    <source>
        <strain>ATCC 700651 / DSM 11573 / NCIMB 13689 / SK2</strain>
    </source>
</reference>
<comment type="function">
    <text evidence="1">Catalyzes the synthesis of GMP from XMP.</text>
</comment>
<comment type="catalytic activity">
    <reaction evidence="1">
        <text>XMP + L-glutamine + ATP + H2O = GMP + L-glutamate + AMP + diphosphate + 2 H(+)</text>
        <dbReference type="Rhea" id="RHEA:11680"/>
        <dbReference type="ChEBI" id="CHEBI:15377"/>
        <dbReference type="ChEBI" id="CHEBI:15378"/>
        <dbReference type="ChEBI" id="CHEBI:29985"/>
        <dbReference type="ChEBI" id="CHEBI:30616"/>
        <dbReference type="ChEBI" id="CHEBI:33019"/>
        <dbReference type="ChEBI" id="CHEBI:57464"/>
        <dbReference type="ChEBI" id="CHEBI:58115"/>
        <dbReference type="ChEBI" id="CHEBI:58359"/>
        <dbReference type="ChEBI" id="CHEBI:456215"/>
        <dbReference type="EC" id="6.3.5.2"/>
    </reaction>
</comment>
<comment type="pathway">
    <text evidence="1">Purine metabolism; GMP biosynthesis; GMP from XMP (L-Gln route): step 1/1.</text>
</comment>
<comment type="subunit">
    <text evidence="1">Homodimer.</text>
</comment>
<dbReference type="EC" id="6.3.5.2" evidence="1"/>
<dbReference type="EMBL" id="AM286690">
    <property type="protein sequence ID" value="CAL17298.1"/>
    <property type="molecule type" value="Genomic_DNA"/>
</dbReference>
<dbReference type="RefSeq" id="WP_011589129.1">
    <property type="nucleotide sequence ID" value="NC_008260.1"/>
</dbReference>
<dbReference type="SMR" id="Q0VNF0"/>
<dbReference type="STRING" id="393595.ABO_1850"/>
<dbReference type="KEGG" id="abo:ABO_1850"/>
<dbReference type="eggNOG" id="COG0518">
    <property type="taxonomic scope" value="Bacteria"/>
</dbReference>
<dbReference type="eggNOG" id="COG0519">
    <property type="taxonomic scope" value="Bacteria"/>
</dbReference>
<dbReference type="HOGENOM" id="CLU_014340_0_5_6"/>
<dbReference type="OrthoDB" id="9802219at2"/>
<dbReference type="UniPathway" id="UPA00189">
    <property type="reaction ID" value="UER00296"/>
</dbReference>
<dbReference type="Proteomes" id="UP000008871">
    <property type="component" value="Chromosome"/>
</dbReference>
<dbReference type="GO" id="GO:0005829">
    <property type="term" value="C:cytosol"/>
    <property type="evidence" value="ECO:0007669"/>
    <property type="project" value="TreeGrafter"/>
</dbReference>
<dbReference type="GO" id="GO:0005524">
    <property type="term" value="F:ATP binding"/>
    <property type="evidence" value="ECO:0007669"/>
    <property type="project" value="UniProtKB-UniRule"/>
</dbReference>
<dbReference type="GO" id="GO:0003921">
    <property type="term" value="F:GMP synthase activity"/>
    <property type="evidence" value="ECO:0007669"/>
    <property type="project" value="InterPro"/>
</dbReference>
<dbReference type="CDD" id="cd01742">
    <property type="entry name" value="GATase1_GMP_Synthase"/>
    <property type="match status" value="1"/>
</dbReference>
<dbReference type="CDD" id="cd01997">
    <property type="entry name" value="GMP_synthase_C"/>
    <property type="match status" value="1"/>
</dbReference>
<dbReference type="FunFam" id="3.30.300.10:FF:000002">
    <property type="entry name" value="GMP synthase [glutamine-hydrolyzing]"/>
    <property type="match status" value="1"/>
</dbReference>
<dbReference type="FunFam" id="3.40.50.620:FF:000001">
    <property type="entry name" value="GMP synthase [glutamine-hydrolyzing]"/>
    <property type="match status" value="1"/>
</dbReference>
<dbReference type="FunFam" id="3.40.50.880:FF:000001">
    <property type="entry name" value="GMP synthase [glutamine-hydrolyzing]"/>
    <property type="match status" value="1"/>
</dbReference>
<dbReference type="Gene3D" id="3.30.300.10">
    <property type="match status" value="1"/>
</dbReference>
<dbReference type="Gene3D" id="3.40.50.880">
    <property type="match status" value="1"/>
</dbReference>
<dbReference type="Gene3D" id="3.40.50.620">
    <property type="entry name" value="HUPs"/>
    <property type="match status" value="1"/>
</dbReference>
<dbReference type="HAMAP" id="MF_00344">
    <property type="entry name" value="GMP_synthase"/>
    <property type="match status" value="1"/>
</dbReference>
<dbReference type="InterPro" id="IPR029062">
    <property type="entry name" value="Class_I_gatase-like"/>
</dbReference>
<dbReference type="InterPro" id="IPR017926">
    <property type="entry name" value="GATASE"/>
</dbReference>
<dbReference type="InterPro" id="IPR001674">
    <property type="entry name" value="GMP_synth_C"/>
</dbReference>
<dbReference type="InterPro" id="IPR004739">
    <property type="entry name" value="GMP_synth_GATase"/>
</dbReference>
<dbReference type="InterPro" id="IPR022955">
    <property type="entry name" value="GMP_synthase"/>
</dbReference>
<dbReference type="InterPro" id="IPR025777">
    <property type="entry name" value="GMPS_ATP_PPase_dom"/>
</dbReference>
<dbReference type="InterPro" id="IPR022310">
    <property type="entry name" value="NAD/GMP_synthase"/>
</dbReference>
<dbReference type="InterPro" id="IPR014729">
    <property type="entry name" value="Rossmann-like_a/b/a_fold"/>
</dbReference>
<dbReference type="NCBIfam" id="TIGR00884">
    <property type="entry name" value="guaA_Cterm"/>
    <property type="match status" value="1"/>
</dbReference>
<dbReference type="NCBIfam" id="TIGR00888">
    <property type="entry name" value="guaA_Nterm"/>
    <property type="match status" value="1"/>
</dbReference>
<dbReference type="NCBIfam" id="NF000848">
    <property type="entry name" value="PRK00074.1"/>
    <property type="match status" value="1"/>
</dbReference>
<dbReference type="PANTHER" id="PTHR11922:SF2">
    <property type="entry name" value="GMP SYNTHASE [GLUTAMINE-HYDROLYZING]"/>
    <property type="match status" value="1"/>
</dbReference>
<dbReference type="PANTHER" id="PTHR11922">
    <property type="entry name" value="GMP SYNTHASE-RELATED"/>
    <property type="match status" value="1"/>
</dbReference>
<dbReference type="Pfam" id="PF00117">
    <property type="entry name" value="GATase"/>
    <property type="match status" value="1"/>
</dbReference>
<dbReference type="Pfam" id="PF00958">
    <property type="entry name" value="GMP_synt_C"/>
    <property type="match status" value="1"/>
</dbReference>
<dbReference type="Pfam" id="PF02540">
    <property type="entry name" value="NAD_synthase"/>
    <property type="match status" value="1"/>
</dbReference>
<dbReference type="PRINTS" id="PR00097">
    <property type="entry name" value="ANTSNTHASEII"/>
</dbReference>
<dbReference type="PRINTS" id="PR00099">
    <property type="entry name" value="CPSGATASE"/>
</dbReference>
<dbReference type="PRINTS" id="PR00096">
    <property type="entry name" value="GATASE"/>
</dbReference>
<dbReference type="SUPFAM" id="SSF52402">
    <property type="entry name" value="Adenine nucleotide alpha hydrolases-like"/>
    <property type="match status" value="1"/>
</dbReference>
<dbReference type="SUPFAM" id="SSF52317">
    <property type="entry name" value="Class I glutamine amidotransferase-like"/>
    <property type="match status" value="1"/>
</dbReference>
<dbReference type="SUPFAM" id="SSF54810">
    <property type="entry name" value="GMP synthetase C-terminal dimerisation domain"/>
    <property type="match status" value="1"/>
</dbReference>
<dbReference type="PROSITE" id="PS51273">
    <property type="entry name" value="GATASE_TYPE_1"/>
    <property type="match status" value="1"/>
</dbReference>
<dbReference type="PROSITE" id="PS51553">
    <property type="entry name" value="GMPS_ATP_PPASE"/>
    <property type="match status" value="1"/>
</dbReference>
<proteinExistence type="inferred from homology"/>
<protein>
    <recommendedName>
        <fullName evidence="1">GMP synthase [glutamine-hydrolyzing]</fullName>
        <ecNumber evidence="1">6.3.5.2</ecNumber>
    </recommendedName>
    <alternativeName>
        <fullName evidence="1">GMP synthetase</fullName>
    </alternativeName>
    <alternativeName>
        <fullName evidence="1">Glutamine amidotransferase</fullName>
    </alternativeName>
</protein>
<evidence type="ECO:0000255" key="1">
    <source>
        <dbReference type="HAMAP-Rule" id="MF_00344"/>
    </source>
</evidence>
<organism>
    <name type="scientific">Alcanivorax borkumensis (strain ATCC 700651 / DSM 11573 / NCIMB 13689 / SK2)</name>
    <dbReference type="NCBI Taxonomy" id="393595"/>
    <lineage>
        <taxon>Bacteria</taxon>
        <taxon>Pseudomonadati</taxon>
        <taxon>Pseudomonadota</taxon>
        <taxon>Gammaproteobacteria</taxon>
        <taxon>Oceanospirillales</taxon>
        <taxon>Alcanivoracaceae</taxon>
        <taxon>Alcanivorax</taxon>
    </lineage>
</organism>
<sequence>MTDIHAQRILILDFGSQYTQLIARRVREIGVYCEIRAFDMTAEELAEFAPKGIILSGGPESVTAAQTPRAPQAVFEAGIPVLGICYGMQTMAEQLGGKVIAGEKHEFGYARVEKAEPNALLDGIVDHEEQGKEFLDVWMSHGDRVGEMPAGFVATATTGSCPIAGMANDEKRFYGIQFHPEVTHTLQGGRLLERFIRELCECEALWTPSNIISDAIDTIREQVGTDEVILGLSGGVDSSVVAALLHKAIGDQLTCVFVDNGLLRHQEGDQVMEMFADNMGVKVIRVDAEDNFLGKLAGEADPEKKRKIIGNTFIDIFDDEASKLQNANWLAQGTIYPDVIESAASKTGKAHVIKSHHNVGGLPEDMKLKLVEPLRELFKDEVRKIGLELGLPYDMVYRHPFPGPGLGVRILGEVKKEYADTLRLADHIFIEELRAAGLYHKTSQAFAVFLPVKSVGVVGDARRYEYVVALRAVETIDFMTARWAHLPYDFLELVSSRIINEIPGISRVTYDISSKPPATIEWE</sequence>
<feature type="chain" id="PRO_1000120205" description="GMP synthase [glutamine-hydrolyzing]">
    <location>
        <begin position="1"/>
        <end position="523"/>
    </location>
</feature>
<feature type="domain" description="Glutamine amidotransferase type-1" evidence="1">
    <location>
        <begin position="8"/>
        <end position="205"/>
    </location>
</feature>
<feature type="domain" description="GMPS ATP-PPase" evidence="1">
    <location>
        <begin position="206"/>
        <end position="398"/>
    </location>
</feature>
<feature type="active site" description="Nucleophile" evidence="1">
    <location>
        <position position="85"/>
    </location>
</feature>
<feature type="active site" evidence="1">
    <location>
        <position position="179"/>
    </location>
</feature>
<feature type="active site" evidence="1">
    <location>
        <position position="181"/>
    </location>
</feature>
<feature type="binding site" evidence="1">
    <location>
        <begin position="233"/>
        <end position="239"/>
    </location>
    <ligand>
        <name>ATP</name>
        <dbReference type="ChEBI" id="CHEBI:30616"/>
    </ligand>
</feature>
<name>GUAA_ALCBS</name>
<accession>Q0VNF0</accession>
<gene>
    <name evidence="1" type="primary">guaA</name>
    <name type="ordered locus">ABO_1850</name>
</gene>
<keyword id="KW-0067">ATP-binding</keyword>
<keyword id="KW-0315">Glutamine amidotransferase</keyword>
<keyword id="KW-0332">GMP biosynthesis</keyword>
<keyword id="KW-0436">Ligase</keyword>
<keyword id="KW-0547">Nucleotide-binding</keyword>
<keyword id="KW-0658">Purine biosynthesis</keyword>
<keyword id="KW-1185">Reference proteome</keyword>